<evidence type="ECO:0000250" key="1"/>
<evidence type="ECO:0000250" key="2">
    <source>
        <dbReference type="UniProtKB" id="P64467"/>
    </source>
</evidence>
<evidence type="ECO:0000305" key="3"/>
<accession>Q320Y2</accession>
<feature type="chain" id="PRO_0000305052" description="OriC-binding nucleoid-associated protein">
    <location>
        <begin position="1"/>
        <end position="71"/>
    </location>
</feature>
<feature type="site" description="Interacts with H-NS" evidence="1">
    <location>
        <position position="44"/>
    </location>
</feature>
<dbReference type="EMBL" id="CP000036">
    <property type="protein sequence ID" value="ABB66126.1"/>
    <property type="molecule type" value="Genomic_DNA"/>
</dbReference>
<dbReference type="RefSeq" id="WP_000217950.1">
    <property type="nucleotide sequence ID" value="NC_007613.1"/>
</dbReference>
<dbReference type="SMR" id="Q320Y2"/>
<dbReference type="GeneID" id="93775777"/>
<dbReference type="KEGG" id="sbo:SBO_1509"/>
<dbReference type="HOGENOM" id="CLU_190629_0_0_6"/>
<dbReference type="Proteomes" id="UP000007067">
    <property type="component" value="Chromosome"/>
</dbReference>
<dbReference type="GO" id="GO:0003677">
    <property type="term" value="F:DNA binding"/>
    <property type="evidence" value="ECO:0007669"/>
    <property type="project" value="UniProtKB-KW"/>
</dbReference>
<dbReference type="FunFam" id="1.20.1280.40:FF:000002">
    <property type="entry name" value="OriC-binding nucleoid-associated protein"/>
    <property type="match status" value="1"/>
</dbReference>
<dbReference type="Gene3D" id="1.20.1280.40">
    <property type="entry name" value="HHA"/>
    <property type="match status" value="1"/>
</dbReference>
<dbReference type="InterPro" id="IPR007985">
    <property type="entry name" value="Hemolysn_expr_modulating_HHA"/>
</dbReference>
<dbReference type="InterPro" id="IPR036666">
    <property type="entry name" value="HHA_sf"/>
</dbReference>
<dbReference type="NCBIfam" id="NF007703">
    <property type="entry name" value="PRK10391.1"/>
    <property type="match status" value="1"/>
</dbReference>
<dbReference type="Pfam" id="PF05321">
    <property type="entry name" value="HHA"/>
    <property type="match status" value="1"/>
</dbReference>
<dbReference type="SUPFAM" id="SSF68989">
    <property type="entry name" value="Hemolysin expression modulating protein HHA"/>
    <property type="match status" value="1"/>
</dbReference>
<keyword id="KW-0238">DNA-binding</keyword>
<keyword id="KW-0804">Transcription</keyword>
<keyword id="KW-0805">Transcription regulation</keyword>
<name>CNU_SHIBS</name>
<protein>
    <recommendedName>
        <fullName>OriC-binding nucleoid-associated protein</fullName>
    </recommendedName>
    <alternativeName>
        <fullName>H-NS/StpA-binding protein 2</fullName>
    </alternativeName>
    <alternativeName>
        <fullName>Transcription modulator YdgT</fullName>
    </alternativeName>
</protein>
<organism>
    <name type="scientific">Shigella boydii serotype 4 (strain Sb227)</name>
    <dbReference type="NCBI Taxonomy" id="300268"/>
    <lineage>
        <taxon>Bacteria</taxon>
        <taxon>Pseudomonadati</taxon>
        <taxon>Pseudomonadota</taxon>
        <taxon>Gammaproteobacteria</taxon>
        <taxon>Enterobacterales</taxon>
        <taxon>Enterobacteriaceae</taxon>
        <taxon>Shigella</taxon>
    </lineage>
</organism>
<comment type="function">
    <text evidence="2">Modifies the set of genes regulated by H-NS; Hha and cnu (YdgT) increase the number of genes bound by H-NS/StpA and may also modulate the oligomerization of the H-NS/StpA-complex on DNA. The complex formed with H-NS binds to the specific 26-bp cnb site in the origin of replication oriC.</text>
</comment>
<comment type="subunit">
    <text evidence="2">Forms complexes with both H-NS and StpA.</text>
</comment>
<comment type="similarity">
    <text evidence="3">Belongs to the Hha/YmoA/Cnu family.</text>
</comment>
<proteinExistence type="inferred from homology"/>
<reference key="1">
    <citation type="journal article" date="2005" name="Nucleic Acids Res.">
        <title>Genome dynamics and diversity of Shigella species, the etiologic agents of bacillary dysentery.</title>
        <authorList>
            <person name="Yang F."/>
            <person name="Yang J."/>
            <person name="Zhang X."/>
            <person name="Chen L."/>
            <person name="Jiang Y."/>
            <person name="Yan Y."/>
            <person name="Tang X."/>
            <person name="Wang J."/>
            <person name="Xiong Z."/>
            <person name="Dong J."/>
            <person name="Xue Y."/>
            <person name="Zhu Y."/>
            <person name="Xu X."/>
            <person name="Sun L."/>
            <person name="Chen S."/>
            <person name="Nie H."/>
            <person name="Peng J."/>
            <person name="Xu J."/>
            <person name="Wang Y."/>
            <person name="Yuan Z."/>
            <person name="Wen Y."/>
            <person name="Yao Z."/>
            <person name="Shen Y."/>
            <person name="Qiang B."/>
            <person name="Hou Y."/>
            <person name="Yu J."/>
            <person name="Jin Q."/>
        </authorList>
    </citation>
    <scope>NUCLEOTIDE SEQUENCE [LARGE SCALE GENOMIC DNA]</scope>
    <source>
        <strain>Sb227</strain>
    </source>
</reference>
<sequence length="71" mass="8417">MTVQDYLLKFRKISSLESLEKLYDHLNYTLTDDQELINMYRAADHRRAELVSGGRLFDLGQVPKSVWHYVQ</sequence>
<gene>
    <name type="primary">cnu</name>
    <name type="synonym">ydgT</name>
    <name type="ordered locus">SBO_1509</name>
</gene>